<sequence length="167" mass="17289">MTHRSSRLEVGPVARGDVATIEHAELPPGWVLTTSGRISGVTEPGELSVHYPFPIADLVALDDALTYSSRACQVRFAIYLGDLGRDTAARAREILGKVPTPDNAVLLAVSPNQCAIEVVYGSQVRGRGAESAAPLGVAAASSAFEQGELVDGLISAIRVLSAGIAPG</sequence>
<feature type="chain" id="PRO_0000396081" description="Uncharacterized protein Rv2468c">
    <location>
        <begin position="1"/>
        <end position="167"/>
    </location>
</feature>
<feature type="strand" evidence="1">
    <location>
        <begin position="34"/>
        <end position="36"/>
    </location>
</feature>
<feature type="strand" evidence="1">
    <location>
        <begin position="44"/>
        <end position="46"/>
    </location>
</feature>
<feature type="helix" evidence="1">
    <location>
        <begin position="55"/>
        <end position="72"/>
    </location>
</feature>
<feature type="strand" evidence="1">
    <location>
        <begin position="75"/>
        <end position="79"/>
    </location>
</feature>
<feature type="helix" evidence="1">
    <location>
        <begin position="87"/>
        <end position="95"/>
    </location>
</feature>
<feature type="strand" evidence="1">
    <location>
        <begin position="98"/>
        <end position="100"/>
    </location>
</feature>
<feature type="helix" evidence="1">
    <location>
        <begin position="101"/>
        <end position="103"/>
    </location>
</feature>
<feature type="strand" evidence="1">
    <location>
        <begin position="104"/>
        <end position="110"/>
    </location>
</feature>
<feature type="turn" evidence="1">
    <location>
        <begin position="111"/>
        <end position="114"/>
    </location>
</feature>
<feature type="strand" evidence="1">
    <location>
        <begin position="115"/>
        <end position="119"/>
    </location>
</feature>
<feature type="strand" evidence="1">
    <location>
        <begin position="122"/>
        <end position="124"/>
    </location>
</feature>
<feature type="strand" evidence="1">
    <location>
        <begin position="126"/>
        <end position="128"/>
    </location>
</feature>
<feature type="helix" evidence="1">
    <location>
        <begin position="129"/>
        <end position="144"/>
    </location>
</feature>
<feature type="turn" evidence="1">
    <location>
        <begin position="145"/>
        <end position="147"/>
    </location>
</feature>
<feature type="helix" evidence="1">
    <location>
        <begin position="150"/>
        <end position="163"/>
    </location>
</feature>
<dbReference type="EMBL" id="AL123456">
    <property type="protein sequence ID" value="CCP45261.1"/>
    <property type="molecule type" value="Genomic_DNA"/>
</dbReference>
<dbReference type="PIR" id="C70866">
    <property type="entry name" value="C70866"/>
</dbReference>
<dbReference type="RefSeq" id="NP_216984.1">
    <property type="nucleotide sequence ID" value="NC_000962.3"/>
</dbReference>
<dbReference type="RefSeq" id="WP_003412669.1">
    <property type="nucleotide sequence ID" value="NC_000962.3"/>
</dbReference>
<dbReference type="PDB" id="8HCR">
    <property type="method" value="EM"/>
    <property type="chains" value="J/V=13-167"/>
</dbReference>
<dbReference type="PDBsum" id="8HCR"/>
<dbReference type="SMR" id="P9WLA7"/>
<dbReference type="STRING" id="83332.Rv2468c"/>
<dbReference type="PaxDb" id="83332-Rv2468c"/>
<dbReference type="DNASU" id="887767"/>
<dbReference type="GeneID" id="887767"/>
<dbReference type="KEGG" id="mtu:Rv2468c"/>
<dbReference type="KEGG" id="mtv:RVBD_2468c"/>
<dbReference type="PATRIC" id="fig|83332.111.peg.2762"/>
<dbReference type="TubercuList" id="Rv2468c"/>
<dbReference type="eggNOG" id="COG1512">
    <property type="taxonomic scope" value="Bacteria"/>
</dbReference>
<dbReference type="InParanoid" id="P9WLA7"/>
<dbReference type="OrthoDB" id="3214027at2"/>
<dbReference type="Proteomes" id="UP000001584">
    <property type="component" value="Chromosome"/>
</dbReference>
<dbReference type="GO" id="GO:0005886">
    <property type="term" value="C:plasma membrane"/>
    <property type="evidence" value="ECO:0007005"/>
    <property type="project" value="MTBBASE"/>
</dbReference>
<dbReference type="InterPro" id="IPR033437">
    <property type="entry name" value="DUF5130"/>
</dbReference>
<dbReference type="Pfam" id="PF17174">
    <property type="entry name" value="DUF5130"/>
    <property type="match status" value="1"/>
</dbReference>
<keyword id="KW-0002">3D-structure</keyword>
<keyword id="KW-1185">Reference proteome</keyword>
<name>Y2468_MYCTU</name>
<accession>P9WLA7</accession>
<accession>L0T9W6</accession>
<accession>O53195</accession>
<accession>Q7D735</accession>
<proteinExistence type="evidence at protein level"/>
<organism>
    <name type="scientific">Mycobacterium tuberculosis (strain ATCC 25618 / H37Rv)</name>
    <dbReference type="NCBI Taxonomy" id="83332"/>
    <lineage>
        <taxon>Bacteria</taxon>
        <taxon>Bacillati</taxon>
        <taxon>Actinomycetota</taxon>
        <taxon>Actinomycetes</taxon>
        <taxon>Mycobacteriales</taxon>
        <taxon>Mycobacteriaceae</taxon>
        <taxon>Mycobacterium</taxon>
        <taxon>Mycobacterium tuberculosis complex</taxon>
    </lineage>
</organism>
<gene>
    <name type="ordered locus">Rv2468c</name>
</gene>
<protein>
    <recommendedName>
        <fullName>Uncharacterized protein Rv2468c</fullName>
    </recommendedName>
</protein>
<evidence type="ECO:0007829" key="1">
    <source>
        <dbReference type="PDB" id="8HCR"/>
    </source>
</evidence>
<reference key="1">
    <citation type="journal article" date="1998" name="Nature">
        <title>Deciphering the biology of Mycobacterium tuberculosis from the complete genome sequence.</title>
        <authorList>
            <person name="Cole S.T."/>
            <person name="Brosch R."/>
            <person name="Parkhill J."/>
            <person name="Garnier T."/>
            <person name="Churcher C.M."/>
            <person name="Harris D.E."/>
            <person name="Gordon S.V."/>
            <person name="Eiglmeier K."/>
            <person name="Gas S."/>
            <person name="Barry C.E. III"/>
            <person name="Tekaia F."/>
            <person name="Badcock K."/>
            <person name="Basham D."/>
            <person name="Brown D."/>
            <person name="Chillingworth T."/>
            <person name="Connor R."/>
            <person name="Davies R.M."/>
            <person name="Devlin K."/>
            <person name="Feltwell T."/>
            <person name="Gentles S."/>
            <person name="Hamlin N."/>
            <person name="Holroyd S."/>
            <person name="Hornsby T."/>
            <person name="Jagels K."/>
            <person name="Krogh A."/>
            <person name="McLean J."/>
            <person name="Moule S."/>
            <person name="Murphy L.D."/>
            <person name="Oliver S."/>
            <person name="Osborne J."/>
            <person name="Quail M.A."/>
            <person name="Rajandream M.A."/>
            <person name="Rogers J."/>
            <person name="Rutter S."/>
            <person name="Seeger K."/>
            <person name="Skelton S."/>
            <person name="Squares S."/>
            <person name="Squares R."/>
            <person name="Sulston J.E."/>
            <person name="Taylor K."/>
            <person name="Whitehead S."/>
            <person name="Barrell B.G."/>
        </authorList>
    </citation>
    <scope>NUCLEOTIDE SEQUENCE [LARGE SCALE GENOMIC DNA]</scope>
    <source>
        <strain>ATCC 25618 / H37Rv</strain>
    </source>
</reference>
<reference key="2">
    <citation type="journal article" date="2011" name="Mol. Cell. Proteomics">
        <title>Proteogenomic analysis of Mycobacterium tuberculosis by high resolution mass spectrometry.</title>
        <authorList>
            <person name="Kelkar D.S."/>
            <person name="Kumar D."/>
            <person name="Kumar P."/>
            <person name="Balakrishnan L."/>
            <person name="Muthusamy B."/>
            <person name="Yadav A.K."/>
            <person name="Shrivastava P."/>
            <person name="Marimuthu A."/>
            <person name="Anand S."/>
            <person name="Sundaram H."/>
            <person name="Kingsbury R."/>
            <person name="Harsha H.C."/>
            <person name="Nair B."/>
            <person name="Prasad T.S."/>
            <person name="Chauhan D.S."/>
            <person name="Katoch K."/>
            <person name="Katoch V.M."/>
            <person name="Kumar P."/>
            <person name="Chaerkady R."/>
            <person name="Ramachandran S."/>
            <person name="Dash D."/>
            <person name="Pandey A."/>
        </authorList>
    </citation>
    <scope>IDENTIFICATION BY MASS SPECTROMETRY [LARGE SCALE ANALYSIS]</scope>
    <source>
        <strain>ATCC 25618 / H37Rv</strain>
    </source>
</reference>